<sequence length="1034" mass="114389">MAALRASLLLSCALTAARAFNLDAERPAVYSGAEGSYFGFAVDFFAPDASSMFLLVGAPKANTSQSNVVEGGQVLQCNWNSNRNCQPIIFDSTGNRDFAPDDPLEFKSHQWFGASVRSKNDKILACAPLYHWRTETKQEREPVGTCYLFDGSKSVEYAPCRSTTIDADGQGFCQGGFSIDFTKGDRVLLGGPGSFYWQGQLISDRVAEILAKYDSKVYSTKYDDQLATRPASAAFDDSYLGYSVAVGDFSGDGIEDFVSGVPRAARTLGMVSIYNGKNMSSMYNFTGEQMAAYFGYSVATTDINGDDYTDLFIGAPLFMDRGSDGKLQEVGQVSICLQRASGGFQIAKLNGFEIFARFGSAIAPLGDLDQDGFNDIAVAAPYGGEDKRGLVYIYNGRATGLNAVPSRILEGQWAARTMPPSFGYSLKGATDVDKNGYPDLIVGAFGVDTAVLYRARPVIRVNAALEVNPTILNPENKACSLADVKVSCFKVKFCLKADGKGKLPNSLNFQVELLLDKLKQKGAIRRALFLHSKQPSHSKNMTITKGGKMNCEELDAFLRDESEFRDKLTPITIFMEYRLDYKTAVDATGLHPILNQFIPANMSRQAHILLDCGEDNICKPKLEVSVRSDQKKIYIGDDNPLTLIVTAENQGEGAYEAELFVIVPPQADFIGVVRNNEALARLSCAFKTENQTRMVVCDLGNPMKAGTKLLAGLRFSVHQQSEMDTSVKFDLQIRSSNLFDNLSPVAFYQVDLAISAAVEIRGVSSPDHIFLPIANWQPKENPETEDDIGPLVQHIYELRNNGPSAFSKVMMTLQWPYKYKNYTLLYIVQYDIDGPMNCTSDMEINPLKIKISAPKEDEKNETFSREDNRNHRISRRDLTAIEGDVQTLGCGNADCLKIVCQVGHLERGKSAILYLKSRLWTQTFMNKENQNHSYSLQSSASFNVIEFPYKNLSFEDIHNSTVVTTNITWGIQPQPMPVPVWVIILAVLAGLLLLAVLVLVMYRMGFFKRVRPPQEEQEREQLQPHENGEGTSEA</sequence>
<accession>P26008</accession>
<protein>
    <recommendedName>
        <fullName>Integrin alpha-V</fullName>
    </recommendedName>
    <alternativeName>
        <fullName>Vitronectin receptor subunit alpha</fullName>
    </alternativeName>
    <component>
        <recommendedName>
            <fullName>Integrin alpha-V heavy chain</fullName>
        </recommendedName>
    </component>
    <component>
        <recommendedName>
            <fullName>Integrin alpha-V light chain</fullName>
        </recommendedName>
    </component>
</protein>
<comment type="function">
    <text evidence="1 2">The alpha-V (ITGAV) integrins are receptors for vitronectin, cytotactin, fibronectin, fibrinogen, laminin, matrix metalloproteinase-2, osteopontin, osteomodulin, prothrombin, thrombospondin, TGFB1 and vWF. They recognize the sequence R-G-D in a wide array of ligands. Alpha-V integrins may play a role in embryo implantation, angiogenesis and wound healing (By similarity). ITGAV:ITGB3 binds to fractalkine (CX3CL1) and may act as its coreceptor in CX3CR1-dependent fractalkine signaling. ITGAV:ITGB3 binds to NRG1 (via EGF domain) and this binding is essential for NRG1-ERBB signaling. ITGAV:ITGB3 binds to FGF1 and this binding is essential for FGF1 signaling. ITGAV:ITGB3 binds to FGF2 and this binding is essential for FGF2 signaling. ITGAV:ITGB3 binds to IGF1 and this binding is essential for IGF1 signaling. ITGAV:ITGB3 binds to IGF2 and this binding is essential for IGF2 signaling. ITGAV:ITGB3 binds to IL1B and this binding is essential for IL1B signaling. ITGAV:ITGB3 binds to PLA2G2A via a site (site 2) which is distinct from the classical ligand-binding site (site 1) and this induces integrin conformational changes and enhanced ligand binding to site 1. ITGAV:ITGB3 and ITGAV:ITGB6 act as receptors for fibrillin-1 (FBN1) and mediate R-G-D-dependent cell adhesion to FBN1 (By similarity). Integrin alpha-V/beta-6 or alpha-V/beta-8 (ITGAV:ITGB6 or ITGAV:ITGB8) mediates R-G-D-dependent release of transforming growth factor beta-1 (TGF-beta-1) from regulatory Latency-associated peptide (LAP), thereby playing a key role in TGF-beta-1 activation (By similarity). ITGAV:ITGB3 acts as a receptor for CD40LG (By similarity). ITGAV:ITGB3 acts as a receptor for IBSP and promotes cell adhesion and migration to IBSP (By similarity).</text>
</comment>
<comment type="subunit">
    <text evidence="1 2">Heterodimer of an alpha and a beta subunit. The alpha subunit is composed of a heavy and a light chain linked by a disulfide bond. Alpha-V (ITGAV) associates with either beta-1 (ITGB1), beta-3 (ITGB3), beta-5 (ITGB5), beta-6 (ITGB6) or beta-8 (ITGB8) (By similarity). Interacts with RAB25. Interacts with CIB1 (By similarity). Integrins ITGAV:ITGB3 and ITGAV:ITGB5 interact with FBLN5 (via N-terminus) (By similarity). ITGAV:ITGB3 and ITGAV:ITGB5 interact with CCN3 (By similarity). ITGAV:ITGB3 interacts with ADGRA2 (By similarity). ITGAV:ITGB3 interacts with FGF2; it is likely that FGF2 can simultaneously bind ITGAV:ITGB3 and FGF receptors (By similarity). ITGAV:ITGB3 is found in a ternary complex with CX3CR1 and CX3CL1. ITGAV:ITGB3 is found in a ternary complex with NRG1 and ERBB3. ITGAV:ITGB3 is found in a ternary complex with FGF1 and FGFR1. ITGAV:ITGB3 is found in a ternary complex with IGF1 and IGF1R (By similarity). ITGAV:ITGB3 interacts with IGF2 (By similarity). ITGAV:ITGB3 and ITGAV:ITGB6 interact with FBN1 (By similarity). ITGAV:ITGB3 interacts with CD9, CD81 and CD151 (via second extracellular domain) (By similarity). ITGAV:ITGB6 interacts with TGFB1 (By similarity).</text>
</comment>
<comment type="subcellular location">
    <subcellularLocation>
        <location>Membrane</location>
        <topology>Single-pass type I membrane protein</topology>
    </subcellularLocation>
    <subcellularLocation>
        <location evidence="1">Cell junction</location>
        <location evidence="1">Focal adhesion</location>
    </subcellularLocation>
</comment>
<comment type="similarity">
    <text evidence="6">Belongs to the integrin alpha chain family.</text>
</comment>
<evidence type="ECO:0000250" key="1">
    <source>
        <dbReference type="UniProtKB" id="P06756"/>
    </source>
</evidence>
<evidence type="ECO:0000250" key="2">
    <source>
        <dbReference type="UniProtKB" id="P43406"/>
    </source>
</evidence>
<evidence type="ECO:0000255" key="3"/>
<evidence type="ECO:0000255" key="4">
    <source>
        <dbReference type="PROSITE-ProRule" id="PRU00803"/>
    </source>
</evidence>
<evidence type="ECO:0000256" key="5">
    <source>
        <dbReference type="SAM" id="MobiDB-lite"/>
    </source>
</evidence>
<evidence type="ECO:0000305" key="6"/>
<gene>
    <name type="primary">ITGAV</name>
</gene>
<dbReference type="EMBL" id="M60517">
    <property type="protein sequence ID" value="AAA49138.1"/>
    <property type="molecule type" value="mRNA"/>
</dbReference>
<dbReference type="PIR" id="A36108">
    <property type="entry name" value="A36108"/>
</dbReference>
<dbReference type="RefSeq" id="NP_990770.1">
    <property type="nucleotide sequence ID" value="NM_205439.1"/>
</dbReference>
<dbReference type="SMR" id="P26008"/>
<dbReference type="BioGRID" id="676669">
    <property type="interactions" value="2"/>
</dbReference>
<dbReference type="FunCoup" id="P26008">
    <property type="interactions" value="1268"/>
</dbReference>
<dbReference type="STRING" id="9031.ENSGALP00000047574"/>
<dbReference type="GlyCosmos" id="P26008">
    <property type="glycosylation" value="13 sites, No reported glycans"/>
</dbReference>
<dbReference type="GlyGen" id="P26008">
    <property type="glycosylation" value="13 sites"/>
</dbReference>
<dbReference type="PaxDb" id="9031-ENSGALP00000004173"/>
<dbReference type="GeneID" id="396420"/>
<dbReference type="KEGG" id="gga:396420"/>
<dbReference type="CTD" id="3685"/>
<dbReference type="VEuPathDB" id="HostDB:geneid_396420"/>
<dbReference type="eggNOG" id="KOG3637">
    <property type="taxonomic scope" value="Eukaryota"/>
</dbReference>
<dbReference type="InParanoid" id="P26008"/>
<dbReference type="OrthoDB" id="5317514at2759"/>
<dbReference type="PhylomeDB" id="P26008"/>
<dbReference type="PRO" id="PR:P26008"/>
<dbReference type="Proteomes" id="UP000000539">
    <property type="component" value="Unassembled WGS sequence"/>
</dbReference>
<dbReference type="GO" id="GO:0009897">
    <property type="term" value="C:external side of plasma membrane"/>
    <property type="evidence" value="ECO:0000318"/>
    <property type="project" value="GO_Central"/>
</dbReference>
<dbReference type="GO" id="GO:0005925">
    <property type="term" value="C:focal adhesion"/>
    <property type="evidence" value="ECO:0000250"/>
    <property type="project" value="UniProtKB"/>
</dbReference>
<dbReference type="GO" id="GO:0034685">
    <property type="term" value="C:integrin alphav-beta6 complex"/>
    <property type="evidence" value="ECO:0000250"/>
    <property type="project" value="UniProtKB"/>
</dbReference>
<dbReference type="GO" id="GO:0034686">
    <property type="term" value="C:integrin alphav-beta8 complex"/>
    <property type="evidence" value="ECO:0000250"/>
    <property type="project" value="UniProtKB"/>
</dbReference>
<dbReference type="GO" id="GO:0008305">
    <property type="term" value="C:integrin complex"/>
    <property type="evidence" value="ECO:0000318"/>
    <property type="project" value="GO_Central"/>
</dbReference>
<dbReference type="GO" id="GO:0005886">
    <property type="term" value="C:plasma membrane"/>
    <property type="evidence" value="ECO:0000304"/>
    <property type="project" value="Reactome"/>
</dbReference>
<dbReference type="GO" id="GO:0005178">
    <property type="term" value="F:integrin binding"/>
    <property type="evidence" value="ECO:0000318"/>
    <property type="project" value="GO_Central"/>
</dbReference>
<dbReference type="GO" id="GO:0046872">
    <property type="term" value="F:metal ion binding"/>
    <property type="evidence" value="ECO:0007669"/>
    <property type="project" value="UniProtKB-KW"/>
</dbReference>
<dbReference type="GO" id="GO:0001525">
    <property type="term" value="P:angiogenesis"/>
    <property type="evidence" value="ECO:0000318"/>
    <property type="project" value="GO_Central"/>
</dbReference>
<dbReference type="GO" id="GO:0033627">
    <property type="term" value="P:cell adhesion mediated by integrin"/>
    <property type="evidence" value="ECO:0000250"/>
    <property type="project" value="UniProtKB"/>
</dbReference>
<dbReference type="GO" id="GO:0098609">
    <property type="term" value="P:cell-cell adhesion"/>
    <property type="evidence" value="ECO:0000318"/>
    <property type="project" value="GO_Central"/>
</dbReference>
<dbReference type="GO" id="GO:0007229">
    <property type="term" value="P:integrin-mediated signaling pathway"/>
    <property type="evidence" value="ECO:0000318"/>
    <property type="project" value="GO_Central"/>
</dbReference>
<dbReference type="FunFam" id="2.130.10.130:FF:000003">
    <property type="entry name" value="Integrin alpha V"/>
    <property type="match status" value="1"/>
</dbReference>
<dbReference type="FunFam" id="2.60.40.1510:FF:000001">
    <property type="entry name" value="Integrin alpha V"/>
    <property type="match status" value="1"/>
</dbReference>
<dbReference type="FunFam" id="2.60.40.1530:FF:000002">
    <property type="entry name" value="integrin alpha-V isoform X2"/>
    <property type="match status" value="1"/>
</dbReference>
<dbReference type="FunFam" id="1.20.5.930:FF:000001">
    <property type="entry name" value="Integrin subunit alpha V"/>
    <property type="match status" value="1"/>
</dbReference>
<dbReference type="FunFam" id="2.60.40.1460:FF:000001">
    <property type="entry name" value="Integrin, alpha V"/>
    <property type="match status" value="1"/>
</dbReference>
<dbReference type="Gene3D" id="1.20.5.930">
    <property type="entry name" value="Bicelle-embedded integrin alpha(iib) transmembrane segment"/>
    <property type="match status" value="1"/>
</dbReference>
<dbReference type="Gene3D" id="2.130.10.130">
    <property type="entry name" value="Integrin alpha, N-terminal"/>
    <property type="match status" value="1"/>
</dbReference>
<dbReference type="Gene3D" id="2.60.40.1460">
    <property type="entry name" value="Integrin domains. Chain A, domain 2"/>
    <property type="match status" value="1"/>
</dbReference>
<dbReference type="Gene3D" id="2.60.40.1510">
    <property type="entry name" value="ntegrin, alpha v. Chain A, domain 3"/>
    <property type="match status" value="1"/>
</dbReference>
<dbReference type="Gene3D" id="2.60.40.1530">
    <property type="entry name" value="ntegrin, alpha v. Chain A, domain 4"/>
    <property type="match status" value="1"/>
</dbReference>
<dbReference type="InterPro" id="IPR013517">
    <property type="entry name" value="FG-GAP"/>
</dbReference>
<dbReference type="InterPro" id="IPR013519">
    <property type="entry name" value="Int_alpha_beta-p"/>
</dbReference>
<dbReference type="InterPro" id="IPR000413">
    <property type="entry name" value="Integrin_alpha"/>
</dbReference>
<dbReference type="InterPro" id="IPR018184">
    <property type="entry name" value="Integrin_alpha_C_CS"/>
</dbReference>
<dbReference type="InterPro" id="IPR013649">
    <property type="entry name" value="Integrin_alpha_Ig-like_1"/>
</dbReference>
<dbReference type="InterPro" id="IPR048285">
    <property type="entry name" value="Integrin_alpha_Ig-like_2"/>
</dbReference>
<dbReference type="InterPro" id="IPR048286">
    <property type="entry name" value="Integrin_alpha_Ig-like_3"/>
</dbReference>
<dbReference type="InterPro" id="IPR028994">
    <property type="entry name" value="Integrin_alpha_N"/>
</dbReference>
<dbReference type="InterPro" id="IPR032695">
    <property type="entry name" value="Integrin_dom_sf"/>
</dbReference>
<dbReference type="PANTHER" id="PTHR23220">
    <property type="entry name" value="INTEGRIN ALPHA"/>
    <property type="match status" value="1"/>
</dbReference>
<dbReference type="PANTHER" id="PTHR23220:SF4">
    <property type="entry name" value="INTEGRIN ALPHA-V"/>
    <property type="match status" value="1"/>
</dbReference>
<dbReference type="Pfam" id="PF01839">
    <property type="entry name" value="FG-GAP"/>
    <property type="match status" value="3"/>
</dbReference>
<dbReference type="Pfam" id="PF08441">
    <property type="entry name" value="Integrin_A_Ig_1"/>
    <property type="match status" value="1"/>
</dbReference>
<dbReference type="Pfam" id="PF20805">
    <property type="entry name" value="Integrin_A_Ig_2"/>
    <property type="match status" value="1"/>
</dbReference>
<dbReference type="Pfam" id="PF20806">
    <property type="entry name" value="Integrin_A_Ig_3"/>
    <property type="match status" value="1"/>
</dbReference>
<dbReference type="Pfam" id="PF00357">
    <property type="entry name" value="Integrin_alpha"/>
    <property type="match status" value="1"/>
</dbReference>
<dbReference type="PRINTS" id="PR01185">
    <property type="entry name" value="INTEGRINA"/>
</dbReference>
<dbReference type="SMART" id="SM00191">
    <property type="entry name" value="Int_alpha"/>
    <property type="match status" value="5"/>
</dbReference>
<dbReference type="SUPFAM" id="SSF69318">
    <property type="entry name" value="Integrin alpha N-terminal domain"/>
    <property type="match status" value="1"/>
</dbReference>
<dbReference type="SUPFAM" id="SSF69179">
    <property type="entry name" value="Integrin domains"/>
    <property type="match status" value="3"/>
</dbReference>
<dbReference type="PROSITE" id="PS51470">
    <property type="entry name" value="FG_GAP"/>
    <property type="match status" value="7"/>
</dbReference>
<dbReference type="PROSITE" id="PS00242">
    <property type="entry name" value="INTEGRIN_ALPHA"/>
    <property type="match status" value="1"/>
</dbReference>
<keyword id="KW-0106">Calcium</keyword>
<keyword id="KW-0130">Cell adhesion</keyword>
<keyword id="KW-0965">Cell junction</keyword>
<keyword id="KW-0165">Cleavage on pair of basic residues</keyword>
<keyword id="KW-1015">Disulfide bond</keyword>
<keyword id="KW-0325">Glycoprotein</keyword>
<keyword id="KW-0401">Integrin</keyword>
<keyword id="KW-0472">Membrane</keyword>
<keyword id="KW-0479">Metal-binding</keyword>
<keyword id="KW-0675">Receptor</keyword>
<keyword id="KW-1185">Reference proteome</keyword>
<keyword id="KW-0677">Repeat</keyword>
<keyword id="KW-0732">Signal</keyword>
<keyword id="KW-0812">Transmembrane</keyword>
<keyword id="KW-1133">Transmembrane helix</keyword>
<reference key="1">
    <citation type="journal article" date="1990" name="Biochemistry">
        <title>Chick integrin alpha V subunit molecular analysis reveals high conservation of structural domains and association with multiple beta subunits in embryo fibroblasts.</title>
        <authorList>
            <person name="Bossy B."/>
            <person name="Reichardt L.F."/>
        </authorList>
    </citation>
    <scope>NUCLEOTIDE SEQUENCE [MRNA]</scope>
    <source>
        <tissue>Embryo</tissue>
    </source>
</reference>
<name>ITAV_CHICK</name>
<feature type="signal peptide" evidence="3">
    <location>
        <begin position="1"/>
        <end position="19"/>
    </location>
</feature>
<feature type="chain" id="PRO_0000016307" description="Integrin alpha-V">
    <location>
        <begin position="20"/>
        <end position="1034"/>
    </location>
</feature>
<feature type="chain" id="PRO_0000016308" description="Integrin alpha-V heavy chain" evidence="3">
    <location>
        <begin position="20"/>
        <end position="875"/>
    </location>
</feature>
<feature type="chain" id="PRO_0000016309" description="Integrin alpha-V light chain" evidence="3">
    <location>
        <begin position="877"/>
        <end position="1034"/>
    </location>
</feature>
<feature type="topological domain" description="Extracellular" evidence="3">
    <location>
        <begin position="20"/>
        <end position="978"/>
    </location>
</feature>
<feature type="transmembrane region" description="Helical" evidence="3">
    <location>
        <begin position="979"/>
        <end position="1002"/>
    </location>
</feature>
<feature type="topological domain" description="Cytoplasmic" evidence="3">
    <location>
        <begin position="1003"/>
        <end position="1034"/>
    </location>
</feature>
<feature type="repeat" description="FG-GAP 1" evidence="4">
    <location>
        <begin position="21"/>
        <end position="86"/>
    </location>
</feature>
<feature type="repeat" description="FG-GAP 2" evidence="4">
    <location>
        <begin position="97"/>
        <end position="158"/>
    </location>
</feature>
<feature type="repeat" description="FG-GAP 3" evidence="4">
    <location>
        <begin position="161"/>
        <end position="213"/>
    </location>
</feature>
<feature type="repeat" description="FG-GAP 4" evidence="4">
    <location>
        <begin position="225"/>
        <end position="279"/>
    </location>
</feature>
<feature type="repeat" description="FG-GAP 5" evidence="4">
    <location>
        <begin position="280"/>
        <end position="345"/>
    </location>
</feature>
<feature type="repeat" description="FG-GAP 6" evidence="4">
    <location>
        <begin position="346"/>
        <end position="403"/>
    </location>
</feature>
<feature type="repeat" description="FG-GAP 7" evidence="4">
    <location>
        <begin position="407"/>
        <end position="470"/>
    </location>
</feature>
<feature type="region of interest" description="Disordered" evidence="5">
    <location>
        <begin position="1013"/>
        <end position="1034"/>
    </location>
</feature>
<feature type="short sequence motif" description="GFFKR motif">
    <location>
        <begin position="1005"/>
        <end position="1009"/>
    </location>
</feature>
<feature type="compositionally biased region" description="Basic and acidic residues" evidence="5">
    <location>
        <begin position="1013"/>
        <end position="1028"/>
    </location>
</feature>
<feature type="binding site" evidence="1">
    <location>
        <position position="248"/>
    </location>
    <ligand>
        <name>Ca(2+)</name>
        <dbReference type="ChEBI" id="CHEBI:29108"/>
        <label>1</label>
    </ligand>
</feature>
<feature type="binding site" evidence="1">
    <location>
        <position position="252"/>
    </location>
    <ligand>
        <name>Ca(2+)</name>
        <dbReference type="ChEBI" id="CHEBI:29108"/>
        <label>1</label>
    </ligand>
</feature>
<feature type="binding site" evidence="1">
    <location>
        <position position="254"/>
    </location>
    <ligand>
        <name>Ca(2+)</name>
        <dbReference type="ChEBI" id="CHEBI:29108"/>
        <label>1</label>
    </ligand>
</feature>
<feature type="binding site" evidence="1">
    <location>
        <position position="256"/>
    </location>
    <ligand>
        <name>Ca(2+)</name>
        <dbReference type="ChEBI" id="CHEBI:29108"/>
        <label>1</label>
    </ligand>
</feature>
<feature type="binding site" evidence="1">
    <location>
        <position position="302"/>
    </location>
    <ligand>
        <name>Ca(2+)</name>
        <dbReference type="ChEBI" id="CHEBI:29108"/>
        <label>2</label>
    </ligand>
</feature>
<feature type="binding site" evidence="1">
    <location>
        <position position="304"/>
    </location>
    <ligand>
        <name>Ca(2+)</name>
        <dbReference type="ChEBI" id="CHEBI:29108"/>
        <label>2</label>
    </ligand>
</feature>
<feature type="binding site" evidence="1">
    <location>
        <position position="306"/>
    </location>
    <ligand>
        <name>Ca(2+)</name>
        <dbReference type="ChEBI" id="CHEBI:29108"/>
        <label>2</label>
    </ligand>
</feature>
<feature type="binding site" evidence="1">
    <location>
        <position position="308"/>
    </location>
    <ligand>
        <name>Ca(2+)</name>
        <dbReference type="ChEBI" id="CHEBI:29108"/>
        <label>2</label>
    </ligand>
</feature>
<feature type="binding site" evidence="1">
    <location>
        <position position="310"/>
    </location>
    <ligand>
        <name>Ca(2+)</name>
        <dbReference type="ChEBI" id="CHEBI:29108"/>
        <label>2</label>
    </ligand>
</feature>
<feature type="binding site" evidence="1">
    <location>
        <position position="367"/>
    </location>
    <ligand>
        <name>Ca(2+)</name>
        <dbReference type="ChEBI" id="CHEBI:29108"/>
        <label>3</label>
    </ligand>
</feature>
<feature type="binding site" evidence="1">
    <location>
        <position position="369"/>
    </location>
    <ligand>
        <name>Ca(2+)</name>
        <dbReference type="ChEBI" id="CHEBI:29108"/>
        <label>3</label>
    </ligand>
</feature>
<feature type="binding site" evidence="1">
    <location>
        <position position="371"/>
    </location>
    <ligand>
        <name>Ca(2+)</name>
        <dbReference type="ChEBI" id="CHEBI:29108"/>
        <label>3</label>
    </ligand>
</feature>
<feature type="binding site" evidence="1">
    <location>
        <position position="373"/>
    </location>
    <ligand>
        <name>Ca(2+)</name>
        <dbReference type="ChEBI" id="CHEBI:29108"/>
        <label>3</label>
    </ligand>
</feature>
<feature type="binding site" evidence="1">
    <location>
        <position position="375"/>
    </location>
    <ligand>
        <name>Ca(2+)</name>
        <dbReference type="ChEBI" id="CHEBI:29108"/>
        <label>3</label>
    </ligand>
</feature>
<feature type="binding site" evidence="1">
    <location>
        <position position="431"/>
    </location>
    <ligand>
        <name>Ca(2+)</name>
        <dbReference type="ChEBI" id="CHEBI:29108"/>
        <label>4</label>
    </ligand>
</feature>
<feature type="binding site" evidence="1">
    <location>
        <position position="433"/>
    </location>
    <ligand>
        <name>Ca(2+)</name>
        <dbReference type="ChEBI" id="CHEBI:29108"/>
        <label>4</label>
    </ligand>
</feature>
<feature type="binding site" evidence="1">
    <location>
        <position position="435"/>
    </location>
    <ligand>
        <name>Ca(2+)</name>
        <dbReference type="ChEBI" id="CHEBI:29108"/>
        <label>4</label>
    </ligand>
</feature>
<feature type="binding site" evidence="1">
    <location>
        <position position="437"/>
    </location>
    <ligand>
        <name>Ca(2+)</name>
        <dbReference type="ChEBI" id="CHEBI:29108"/>
        <label>4</label>
    </ligand>
</feature>
<feature type="binding site" evidence="1">
    <location>
        <position position="439"/>
    </location>
    <ligand>
        <name>Ca(2+)</name>
        <dbReference type="ChEBI" id="CHEBI:29108"/>
        <label>4</label>
    </ligand>
</feature>
<feature type="glycosylation site" description="N-linked (GlcNAc...) asparagine" evidence="3">
    <location>
        <position position="62"/>
    </location>
</feature>
<feature type="glycosylation site" description="N-linked (GlcNAc...) asparagine" evidence="3">
    <location>
        <position position="278"/>
    </location>
</feature>
<feature type="glycosylation site" description="N-linked (GlcNAc...) asparagine" evidence="3">
    <location>
        <position position="284"/>
    </location>
</feature>
<feature type="glycosylation site" description="N-linked (GlcNAc...) asparagine" evidence="3">
    <location>
        <position position="540"/>
    </location>
</feature>
<feature type="glycosylation site" description="N-linked (GlcNAc...) asparagine" evidence="3">
    <location>
        <position position="601"/>
    </location>
</feature>
<feature type="glycosylation site" description="N-linked (GlcNAc...) asparagine" evidence="3">
    <location>
        <position position="690"/>
    </location>
</feature>
<feature type="glycosylation site" description="N-linked (GlcNAc...) asparagine" evidence="3">
    <location>
        <position position="821"/>
    </location>
</feature>
<feature type="glycosylation site" description="N-linked (GlcNAc...) asparagine" evidence="3">
    <location>
        <position position="837"/>
    </location>
</feature>
<feature type="glycosylation site" description="N-linked (GlcNAc...) asparagine" evidence="3">
    <location>
        <position position="860"/>
    </location>
</feature>
<feature type="glycosylation site" description="N-linked (GlcNAc...) asparagine" evidence="3">
    <location>
        <position position="931"/>
    </location>
</feature>
<feature type="glycosylation site" description="N-linked (GlcNAc...) asparagine" evidence="3">
    <location>
        <position position="951"/>
    </location>
</feature>
<feature type="glycosylation site" description="N-linked (GlcNAc...) asparagine" evidence="3">
    <location>
        <position position="959"/>
    </location>
</feature>
<feature type="glycosylation site" description="N-linked (GlcNAc...) asparagine" evidence="3">
    <location>
        <position position="966"/>
    </location>
</feature>
<feature type="disulfide bond" evidence="1">
    <location>
        <begin position="77"/>
        <end position="85"/>
    </location>
</feature>
<feature type="disulfide bond" evidence="1">
    <location>
        <begin position="126"/>
        <end position="146"/>
    </location>
</feature>
<feature type="disulfide bond" evidence="1">
    <location>
        <begin position="160"/>
        <end position="173"/>
    </location>
</feature>
<feature type="disulfide bond" evidence="1">
    <location>
        <begin position="479"/>
        <end position="488"/>
    </location>
</feature>
<feature type="disulfide bond" evidence="1">
    <location>
        <begin position="494"/>
        <end position="551"/>
    </location>
</feature>
<feature type="disulfide bond" evidence="1">
    <location>
        <begin position="612"/>
        <end position="618"/>
    </location>
</feature>
<feature type="disulfide bond" evidence="1">
    <location>
        <begin position="684"/>
        <end position="697"/>
    </location>
</feature>
<feature type="disulfide bond" description="Interchain (between heavy and light chains)" evidence="1">
    <location>
        <begin position="838"/>
        <end position="900"/>
    </location>
</feature>
<feature type="disulfide bond" evidence="1">
    <location>
        <begin position="890"/>
        <end position="895"/>
    </location>
</feature>
<organism>
    <name type="scientific">Gallus gallus</name>
    <name type="common">Chicken</name>
    <dbReference type="NCBI Taxonomy" id="9031"/>
    <lineage>
        <taxon>Eukaryota</taxon>
        <taxon>Metazoa</taxon>
        <taxon>Chordata</taxon>
        <taxon>Craniata</taxon>
        <taxon>Vertebrata</taxon>
        <taxon>Euteleostomi</taxon>
        <taxon>Archelosauria</taxon>
        <taxon>Archosauria</taxon>
        <taxon>Dinosauria</taxon>
        <taxon>Saurischia</taxon>
        <taxon>Theropoda</taxon>
        <taxon>Coelurosauria</taxon>
        <taxon>Aves</taxon>
        <taxon>Neognathae</taxon>
        <taxon>Galloanserae</taxon>
        <taxon>Galliformes</taxon>
        <taxon>Phasianidae</taxon>
        <taxon>Phasianinae</taxon>
        <taxon>Gallus</taxon>
    </lineage>
</organism>
<proteinExistence type="evidence at transcript level"/>